<evidence type="ECO:0000255" key="1"/>
<evidence type="ECO:0000256" key="2">
    <source>
        <dbReference type="SAM" id="MobiDB-lite"/>
    </source>
</evidence>
<evidence type="ECO:0000305" key="3"/>
<organismHost>
    <name type="scientific">Gallus gallus</name>
    <name type="common">Chicken</name>
    <dbReference type="NCBI Taxonomy" id="9031"/>
</organismHost>
<dbReference type="EMBL" id="AF243438">
    <property type="protein sequence ID" value="AAG14253.1"/>
    <property type="molecule type" value="Genomic_DNA"/>
</dbReference>
<dbReference type="RefSeq" id="YP_001033989.1">
    <property type="nucleotide sequence ID" value="NC_002229.3"/>
</dbReference>
<dbReference type="SMR" id="Q77MR0"/>
<dbReference type="GeneID" id="4811534"/>
<dbReference type="KEGG" id="vg:4811534"/>
<dbReference type="Proteomes" id="UP000008072">
    <property type="component" value="Segment"/>
</dbReference>
<dbReference type="GO" id="GO:0033644">
    <property type="term" value="C:host cell membrane"/>
    <property type="evidence" value="ECO:0007669"/>
    <property type="project" value="UniProtKB-SubCell"/>
</dbReference>
<dbReference type="GO" id="GO:0016020">
    <property type="term" value="C:membrane"/>
    <property type="evidence" value="ECO:0007669"/>
    <property type="project" value="UniProtKB-KW"/>
</dbReference>
<dbReference type="InterPro" id="IPR006930">
    <property type="entry name" value="Herpes_pp38"/>
</dbReference>
<dbReference type="Pfam" id="PF04846">
    <property type="entry name" value="Herpes_pp38"/>
    <property type="match status" value="1"/>
</dbReference>
<reference key="1">
    <citation type="journal article" date="2000" name="J. Virol.">
        <title>The genome of a very virulent Marek's disease virus.</title>
        <authorList>
            <person name="Tulman E.R."/>
            <person name="Afonso C.L."/>
            <person name="Lu Z."/>
            <person name="Zsak L."/>
            <person name="Rock D.L."/>
            <person name="Kutish G.F."/>
        </authorList>
    </citation>
    <scope>NUCLEOTIDE SEQUENCE [LARGE SCALE GENOMIC DNA]</scope>
</reference>
<comment type="subcellular location">
    <subcellularLocation>
        <location evidence="3">Host membrane</location>
        <topology evidence="3">Single-pass membrane protein</topology>
    </subcellularLocation>
</comment>
<organism>
    <name type="scientific">Gallid herpesvirus 2 (strain Chicken/Md5/ATCC VR-987)</name>
    <name type="common">GaHV-2</name>
    <name type="synonym">Marek's disease herpesvirus type 1</name>
    <dbReference type="NCBI Taxonomy" id="10389"/>
    <lineage>
        <taxon>Viruses</taxon>
        <taxon>Duplodnaviria</taxon>
        <taxon>Heunggongvirae</taxon>
        <taxon>Peploviricota</taxon>
        <taxon>Herviviricetes</taxon>
        <taxon>Herpesvirales</taxon>
        <taxon>Orthoherpesviridae</taxon>
        <taxon>Alphaherpesvirinae</taxon>
        <taxon>Mardivirus</taxon>
        <taxon>Mardivirus gallidalpha2</taxon>
        <taxon>Gallid alphaherpesvirus 2</taxon>
    </lineage>
</organism>
<feature type="chain" id="PRO_0000406590" description="Phosphoprotein pp38">
    <location>
        <begin position="1"/>
        <end position="290"/>
    </location>
</feature>
<feature type="transmembrane region" description="Helical" evidence="1">
    <location>
        <begin position="251"/>
        <end position="271"/>
    </location>
</feature>
<feature type="region of interest" description="Disordered" evidence="2">
    <location>
        <begin position="1"/>
        <end position="49"/>
    </location>
</feature>
<feature type="region of interest" description="Disordered" evidence="2">
    <location>
        <begin position="67"/>
        <end position="87"/>
    </location>
</feature>
<feature type="region of interest" description="Disordered" evidence="2">
    <location>
        <begin position="111"/>
        <end position="146"/>
    </location>
</feature>
<feature type="compositionally biased region" description="Basic and acidic residues" evidence="2">
    <location>
        <begin position="34"/>
        <end position="49"/>
    </location>
</feature>
<feature type="compositionally biased region" description="Basic and acidic residues" evidence="2">
    <location>
        <begin position="113"/>
        <end position="145"/>
    </location>
</feature>
<proteinExistence type="predicted"/>
<name>PP38_GAHVM</name>
<gene>
    <name type="primary">MDV073</name>
</gene>
<sequence>MEFEAEHEGLTASWVAPAPQGGKGAEGRAGVADEAGHGKTEAECAEDGEKCGDAEMSALDRVQRDRWRFSSPPPHSGVTGKGAIPIKGDGKAIECQELTGEGEWLSQWEELPPEPRRSGNEHLDESRYAKQTERGSSTGKEEGDGMKQMGELAQQCEGGTYADLLVEAEQAVVHSVRALMLAERQNPNILGEHLNKKRVLVQRPRTILSVESENATMRSYMLVTLICSAKSLLLGSCMSFFAGMLVGRTADVKTPLWDTVCLLMAFCAGIVVGGVDSGEVESGETKSESN</sequence>
<protein>
    <recommendedName>
        <fullName>Phosphoprotein pp38</fullName>
    </recommendedName>
</protein>
<accession>Q77MR0</accession>
<keyword id="KW-1043">Host membrane</keyword>
<keyword id="KW-0472">Membrane</keyword>
<keyword id="KW-1185">Reference proteome</keyword>
<keyword id="KW-0812">Transmembrane</keyword>
<keyword id="KW-1133">Transmembrane helix</keyword>